<evidence type="ECO:0000255" key="1">
    <source>
        <dbReference type="HAMAP-Rule" id="MF_01620"/>
    </source>
</evidence>
<evidence type="ECO:0007829" key="2">
    <source>
        <dbReference type="PDB" id="1WDK"/>
    </source>
</evidence>
<evidence type="ECO:0007829" key="3">
    <source>
        <dbReference type="PDB" id="2D3T"/>
    </source>
</evidence>
<sequence>MSLNPRDVVIVDFGRTPMGRSKGGMHRNTRAEDMSAHLISKVLERNSKVDPGEVEDVIWGCVNQTLEQGWNIARMASLMTQIPHTSAAQTVSRLCGSSMSALHTAAQAIMTGNGDVFVVGGVEHMGHVSMMHGVDPNPHMSLYAAKASGMMGLTAEMLGKMHGISREQQDAFAVRSHQLAHKATVEGKFKDEIIPMQGYDENGFLKIFDYDETIRPDTTLESLAALKPAFNPKGGTVTAGTSSQITDGASCMIVMSAQRAKDLGLEPLAVIRSMAVAGVDPAIMGYGPVPATQKALKRAGLNMADIDFIELNEAFAAQALPVLKDLKVLDKMNEKVNLHGGAIALGHPFGCSGARISGTLLNVMKQNGGTFGLSTMCIGLGQGIATVFERV</sequence>
<gene>
    <name evidence="1" type="primary">fadA</name>
    <name type="synonym">faoB</name>
</gene>
<proteinExistence type="evidence at protein level"/>
<comment type="function">
    <text evidence="1">Catalyzes the final step of fatty acid oxidation in which acetyl-CoA is released and the CoA ester of a fatty acid two carbons shorter is formed.</text>
</comment>
<comment type="catalytic activity">
    <reaction evidence="1">
        <text>an acyl-CoA + acetyl-CoA = a 3-oxoacyl-CoA + CoA</text>
        <dbReference type="Rhea" id="RHEA:21564"/>
        <dbReference type="ChEBI" id="CHEBI:57287"/>
        <dbReference type="ChEBI" id="CHEBI:57288"/>
        <dbReference type="ChEBI" id="CHEBI:58342"/>
        <dbReference type="ChEBI" id="CHEBI:90726"/>
        <dbReference type="EC" id="2.3.1.16"/>
    </reaction>
</comment>
<comment type="pathway">
    <text evidence="1">Lipid metabolism; fatty acid beta-oxidation.</text>
</comment>
<comment type="subunit">
    <text evidence="1">Heterotetramer of two alpha chains (FadB) and two beta chains (FadA).</text>
</comment>
<comment type="interaction">
    <interactant intactId="EBI-1039311">
        <id>P28790</id>
    </interactant>
    <interactant intactId="EBI-1039318">
        <id>P28793</id>
        <label>fadB</label>
    </interactant>
    <organismsDiffer>false</organismsDiffer>
    <experiments>4</experiments>
</comment>
<comment type="subcellular location">
    <subcellularLocation>
        <location evidence="1">Cytoplasm</location>
    </subcellularLocation>
</comment>
<comment type="similarity">
    <text evidence="1">Belongs to the thiolase-like superfamily. Thiolase family.</text>
</comment>
<name>FADA_PSEFR</name>
<reference key="1">
    <citation type="journal article" date="1992" name="J. Biochem.">
        <title>Primary structures of the genes, faoA and faoB, from Pseudomonas fragi B-0771 which encode the two subunits of the HDT multienzyme complex involved in fatty acid beta-oxidation.</title>
        <authorList>
            <person name="Sato S."/>
            <person name="Hayashi M."/>
            <person name="Imamura S."/>
            <person name="Ozeki Y."/>
            <person name="Kawaguchi A."/>
        </authorList>
    </citation>
    <scope>NUCLEOTIDE SEQUENCE [GENOMIC DNA]</scope>
    <scope>PARTIAL PROTEIN SEQUENCE</scope>
    <source>
        <strain>B-0771</strain>
    </source>
</reference>
<accession>P28790</accession>
<protein>
    <recommendedName>
        <fullName evidence="1">3-ketoacyl-CoA thiolase</fullName>
        <ecNumber evidence="1">2.3.1.16</ecNumber>
    </recommendedName>
    <alternativeName>
        <fullName evidence="1">Acetyl-CoA acyltransferase</fullName>
    </alternativeName>
    <alternativeName>
        <fullName evidence="1">Beta-ketothiolase</fullName>
    </alternativeName>
    <alternativeName>
        <fullName evidence="1">Fatty acid oxidation complex subunit beta</fullName>
    </alternativeName>
</protein>
<dbReference type="EC" id="2.3.1.16" evidence="1"/>
<dbReference type="EMBL" id="D10390">
    <property type="protein sequence ID" value="BAA01228.1"/>
    <property type="molecule type" value="Genomic_DNA"/>
</dbReference>
<dbReference type="PIR" id="JS0624">
    <property type="entry name" value="JS0624"/>
</dbReference>
<dbReference type="RefSeq" id="WP_086796108.1">
    <property type="nucleotide sequence ID" value="NZ_CAUQAK010000017.1"/>
</dbReference>
<dbReference type="PDB" id="1WDK">
    <property type="method" value="X-ray"/>
    <property type="resolution" value="2.50 A"/>
    <property type="chains" value="C/D=2-391"/>
</dbReference>
<dbReference type="PDB" id="1WDL">
    <property type="method" value="X-ray"/>
    <property type="resolution" value="3.50 A"/>
    <property type="chains" value="C/D=2-391"/>
</dbReference>
<dbReference type="PDB" id="1WDM">
    <property type="method" value="X-ray"/>
    <property type="resolution" value="3.80 A"/>
    <property type="chains" value="C/D=2-391"/>
</dbReference>
<dbReference type="PDB" id="2D3T">
    <property type="method" value="X-ray"/>
    <property type="resolution" value="3.40 A"/>
    <property type="chains" value="C/D=2-391"/>
</dbReference>
<dbReference type="PDBsum" id="1WDK"/>
<dbReference type="PDBsum" id="1WDL"/>
<dbReference type="PDBsum" id="1WDM"/>
<dbReference type="PDBsum" id="2D3T"/>
<dbReference type="SMR" id="P28790"/>
<dbReference type="DIP" id="DIP-29090N"/>
<dbReference type="IntAct" id="P28790">
    <property type="interactions" value="1"/>
</dbReference>
<dbReference type="STRING" id="296.B6D87_06990"/>
<dbReference type="DrugBank" id="DB08249">
    <property type="generic name" value="3,6,9,12,15-PENTAOXATRICOSAN-1-OL"/>
</dbReference>
<dbReference type="eggNOG" id="COG0183">
    <property type="taxonomic scope" value="Bacteria"/>
</dbReference>
<dbReference type="BRENDA" id="2.3.1.16">
    <property type="organism ID" value="5123"/>
</dbReference>
<dbReference type="UniPathway" id="UPA00659"/>
<dbReference type="EvolutionaryTrace" id="P28790"/>
<dbReference type="GO" id="GO:0005737">
    <property type="term" value="C:cytoplasm"/>
    <property type="evidence" value="ECO:0007669"/>
    <property type="project" value="UniProtKB-SubCell"/>
</dbReference>
<dbReference type="GO" id="GO:0003988">
    <property type="term" value="F:acetyl-CoA C-acyltransferase activity"/>
    <property type="evidence" value="ECO:0007669"/>
    <property type="project" value="UniProtKB-UniRule"/>
</dbReference>
<dbReference type="GO" id="GO:0006635">
    <property type="term" value="P:fatty acid beta-oxidation"/>
    <property type="evidence" value="ECO:0007669"/>
    <property type="project" value="UniProtKB-UniRule"/>
</dbReference>
<dbReference type="GO" id="GO:0010124">
    <property type="term" value="P:phenylacetate catabolic process"/>
    <property type="evidence" value="ECO:0007669"/>
    <property type="project" value="TreeGrafter"/>
</dbReference>
<dbReference type="CDD" id="cd00751">
    <property type="entry name" value="thiolase"/>
    <property type="match status" value="1"/>
</dbReference>
<dbReference type="FunFam" id="3.40.47.10:FF:000010">
    <property type="entry name" value="Acetyl-CoA acetyltransferase (Thiolase)"/>
    <property type="match status" value="1"/>
</dbReference>
<dbReference type="Gene3D" id="3.40.47.10">
    <property type="match status" value="2"/>
</dbReference>
<dbReference type="HAMAP" id="MF_01620">
    <property type="entry name" value="FadA"/>
    <property type="match status" value="1"/>
</dbReference>
<dbReference type="InterPro" id="IPR012805">
    <property type="entry name" value="FadA"/>
</dbReference>
<dbReference type="InterPro" id="IPR002155">
    <property type="entry name" value="Thiolase"/>
</dbReference>
<dbReference type="InterPro" id="IPR016039">
    <property type="entry name" value="Thiolase-like"/>
</dbReference>
<dbReference type="InterPro" id="IPR050215">
    <property type="entry name" value="Thiolase-like_sf_Thiolase"/>
</dbReference>
<dbReference type="InterPro" id="IPR020615">
    <property type="entry name" value="Thiolase_acyl_enz_int_AS"/>
</dbReference>
<dbReference type="InterPro" id="IPR020610">
    <property type="entry name" value="Thiolase_AS"/>
</dbReference>
<dbReference type="InterPro" id="IPR020617">
    <property type="entry name" value="Thiolase_C"/>
</dbReference>
<dbReference type="InterPro" id="IPR020613">
    <property type="entry name" value="Thiolase_CS"/>
</dbReference>
<dbReference type="InterPro" id="IPR020616">
    <property type="entry name" value="Thiolase_N"/>
</dbReference>
<dbReference type="NCBIfam" id="TIGR01930">
    <property type="entry name" value="AcCoA-C-Actrans"/>
    <property type="match status" value="1"/>
</dbReference>
<dbReference type="NCBIfam" id="TIGR02445">
    <property type="entry name" value="fadA"/>
    <property type="match status" value="1"/>
</dbReference>
<dbReference type="NCBIfam" id="NF006510">
    <property type="entry name" value="PRK08947.1"/>
    <property type="match status" value="1"/>
</dbReference>
<dbReference type="PANTHER" id="PTHR43853:SF11">
    <property type="entry name" value="3-KETOACYL-COA THIOLASE FADA"/>
    <property type="match status" value="1"/>
</dbReference>
<dbReference type="PANTHER" id="PTHR43853">
    <property type="entry name" value="3-KETOACYL-COA THIOLASE, PEROXISOMAL"/>
    <property type="match status" value="1"/>
</dbReference>
<dbReference type="Pfam" id="PF02803">
    <property type="entry name" value="Thiolase_C"/>
    <property type="match status" value="1"/>
</dbReference>
<dbReference type="Pfam" id="PF00108">
    <property type="entry name" value="Thiolase_N"/>
    <property type="match status" value="1"/>
</dbReference>
<dbReference type="PIRSF" id="PIRSF000429">
    <property type="entry name" value="Ac-CoA_Ac_transf"/>
    <property type="match status" value="1"/>
</dbReference>
<dbReference type="SUPFAM" id="SSF53901">
    <property type="entry name" value="Thiolase-like"/>
    <property type="match status" value="2"/>
</dbReference>
<dbReference type="PROSITE" id="PS00098">
    <property type="entry name" value="THIOLASE_1"/>
    <property type="match status" value="1"/>
</dbReference>
<dbReference type="PROSITE" id="PS00737">
    <property type="entry name" value="THIOLASE_2"/>
    <property type="match status" value="1"/>
</dbReference>
<dbReference type="PROSITE" id="PS00099">
    <property type="entry name" value="THIOLASE_3"/>
    <property type="match status" value="1"/>
</dbReference>
<feature type="initiator methionine" description="Removed">
    <location>
        <position position="1"/>
    </location>
</feature>
<feature type="chain" id="PRO_0000206380" description="3-ketoacyl-CoA thiolase">
    <location>
        <begin position="2"/>
        <end position="391"/>
    </location>
</feature>
<feature type="active site" description="Acyl-thioester intermediate" evidence="1">
    <location>
        <position position="95"/>
    </location>
</feature>
<feature type="active site" description="Proton acceptor" evidence="1">
    <location>
        <position position="347"/>
    </location>
</feature>
<feature type="active site" description="Proton acceptor" evidence="1">
    <location>
        <position position="377"/>
    </location>
</feature>
<feature type="strand" evidence="2">
    <location>
        <begin position="8"/>
        <end position="15"/>
    </location>
</feature>
<feature type="turn" evidence="2">
    <location>
        <begin position="21"/>
        <end position="23"/>
    </location>
</feature>
<feature type="turn" evidence="2">
    <location>
        <begin position="25"/>
        <end position="28"/>
    </location>
</feature>
<feature type="helix" evidence="2">
    <location>
        <begin position="31"/>
        <end position="45"/>
    </location>
</feature>
<feature type="helix" evidence="2">
    <location>
        <begin position="51"/>
        <end position="53"/>
    </location>
</feature>
<feature type="strand" evidence="2">
    <location>
        <begin position="54"/>
        <end position="60"/>
    </location>
</feature>
<feature type="strand" evidence="2">
    <location>
        <begin position="62"/>
        <end position="66"/>
    </location>
</feature>
<feature type="turn" evidence="2">
    <location>
        <begin position="67"/>
        <end position="71"/>
    </location>
</feature>
<feature type="helix" evidence="2">
    <location>
        <begin position="72"/>
        <end position="77"/>
    </location>
</feature>
<feature type="strand" evidence="2">
    <location>
        <begin position="80"/>
        <end position="82"/>
    </location>
</feature>
<feature type="strand" evidence="2">
    <location>
        <begin position="86"/>
        <end position="92"/>
    </location>
</feature>
<feature type="helix" evidence="2">
    <location>
        <begin position="94"/>
        <end position="96"/>
    </location>
</feature>
<feature type="helix" evidence="2">
    <location>
        <begin position="97"/>
        <end position="110"/>
    </location>
</feature>
<feature type="strand" evidence="2">
    <location>
        <begin position="115"/>
        <end position="124"/>
    </location>
</feature>
<feature type="turn" evidence="2">
    <location>
        <begin position="125"/>
        <end position="127"/>
    </location>
</feature>
<feature type="turn" evidence="2">
    <location>
        <begin position="130"/>
        <end position="133"/>
    </location>
</feature>
<feature type="helix" evidence="2">
    <location>
        <begin position="138"/>
        <end position="142"/>
    </location>
</feature>
<feature type="helix" evidence="2">
    <location>
        <begin position="146"/>
        <end position="149"/>
    </location>
</feature>
<feature type="helix" evidence="2">
    <location>
        <begin position="151"/>
        <end position="162"/>
    </location>
</feature>
<feature type="helix" evidence="2">
    <location>
        <begin position="166"/>
        <end position="185"/>
    </location>
</feature>
<feature type="turn" evidence="2">
    <location>
        <begin position="186"/>
        <end position="192"/>
    </location>
</feature>
<feature type="strand" evidence="2">
    <location>
        <begin position="196"/>
        <end position="199"/>
    </location>
</feature>
<feature type="strand" evidence="2">
    <location>
        <begin position="205"/>
        <end position="208"/>
    </location>
</feature>
<feature type="helix" evidence="2">
    <location>
        <begin position="220"/>
        <end position="224"/>
    </location>
</feature>
<feature type="turn" evidence="2">
    <location>
        <begin position="232"/>
        <end position="234"/>
    </location>
</feature>
<feature type="helix" evidence="2">
    <location>
        <begin position="239"/>
        <end position="241"/>
    </location>
</feature>
<feature type="strand" evidence="2">
    <location>
        <begin position="246"/>
        <end position="256"/>
    </location>
</feature>
<feature type="helix" evidence="2">
    <location>
        <begin position="257"/>
        <end position="262"/>
    </location>
</feature>
<feature type="strand" evidence="2">
    <location>
        <begin position="268"/>
        <end position="278"/>
    </location>
</feature>
<feature type="helix" evidence="2">
    <location>
        <begin position="281"/>
        <end position="286"/>
    </location>
</feature>
<feature type="helix" evidence="2">
    <location>
        <begin position="288"/>
        <end position="299"/>
    </location>
</feature>
<feature type="helix" evidence="2">
    <location>
        <begin position="303"/>
        <end position="305"/>
    </location>
</feature>
<feature type="strand" evidence="2">
    <location>
        <begin position="308"/>
        <end position="311"/>
    </location>
</feature>
<feature type="helix" evidence="2">
    <location>
        <begin position="316"/>
        <end position="325"/>
    </location>
</feature>
<feature type="helix" evidence="2">
    <location>
        <begin position="329"/>
        <end position="331"/>
    </location>
</feature>
<feature type="helix" evidence="2">
    <location>
        <begin position="332"/>
        <end position="335"/>
    </location>
</feature>
<feature type="strand" evidence="3">
    <location>
        <begin position="336"/>
        <end position="339"/>
    </location>
</feature>
<feature type="helix" evidence="2">
    <location>
        <begin position="342"/>
        <end position="345"/>
    </location>
</feature>
<feature type="helix" evidence="2">
    <location>
        <begin position="349"/>
        <end position="366"/>
    </location>
</feature>
<feature type="strand" evidence="2">
    <location>
        <begin position="370"/>
        <end position="378"/>
    </location>
</feature>
<feature type="turn" evidence="2">
    <location>
        <begin position="379"/>
        <end position="381"/>
    </location>
</feature>
<feature type="strand" evidence="2">
    <location>
        <begin position="382"/>
        <end position="389"/>
    </location>
</feature>
<organism>
    <name type="scientific">Pseudomonas fragi</name>
    <dbReference type="NCBI Taxonomy" id="296"/>
    <lineage>
        <taxon>Bacteria</taxon>
        <taxon>Pseudomonadati</taxon>
        <taxon>Pseudomonadota</taxon>
        <taxon>Gammaproteobacteria</taxon>
        <taxon>Pseudomonadales</taxon>
        <taxon>Pseudomonadaceae</taxon>
        <taxon>Pseudomonas</taxon>
    </lineage>
</organism>
<keyword id="KW-0002">3D-structure</keyword>
<keyword id="KW-0012">Acyltransferase</keyword>
<keyword id="KW-0963">Cytoplasm</keyword>
<keyword id="KW-0903">Direct protein sequencing</keyword>
<keyword id="KW-0276">Fatty acid metabolism</keyword>
<keyword id="KW-0442">Lipid degradation</keyword>
<keyword id="KW-0443">Lipid metabolism</keyword>
<keyword id="KW-0808">Transferase</keyword>